<comment type="tissue specificity">
    <text evidence="3">Expressed in stems.</text>
</comment>
<comment type="similarity">
    <text evidence="4">Belongs to the MEG family.</text>
</comment>
<accession>A8MRV5</accession>
<feature type="signal peptide" evidence="2">
    <location>
        <begin position="1"/>
        <end position="23"/>
    </location>
</feature>
<feature type="chain" id="PRO_0000430072" description="EMBRYO SURROUNDING FACTOR 1-like protein 11">
    <location>
        <begin position="24"/>
        <end position="88"/>
    </location>
</feature>
<feature type="disulfide bond" evidence="1">
    <location>
        <begin position="44"/>
        <end position="59"/>
    </location>
</feature>
<feature type="disulfide bond" evidence="1">
    <location>
        <begin position="49"/>
        <end position="78"/>
    </location>
</feature>
<feature type="disulfide bond" evidence="1">
    <location>
        <begin position="57"/>
        <end position="74"/>
    </location>
</feature>
<feature type="disulfide bond" evidence="1">
    <location>
        <begin position="60"/>
        <end position="67"/>
    </location>
</feature>
<name>ESFLB_ARATH</name>
<gene>
    <name type="primary">ESFL11</name>
    <name type="ordered locus">At5g50345</name>
    <name type="ORF">MXI22</name>
</gene>
<organism>
    <name type="scientific">Arabidopsis thaliana</name>
    <name type="common">Mouse-ear cress</name>
    <dbReference type="NCBI Taxonomy" id="3702"/>
    <lineage>
        <taxon>Eukaryota</taxon>
        <taxon>Viridiplantae</taxon>
        <taxon>Streptophyta</taxon>
        <taxon>Embryophyta</taxon>
        <taxon>Tracheophyta</taxon>
        <taxon>Spermatophyta</taxon>
        <taxon>Magnoliopsida</taxon>
        <taxon>eudicotyledons</taxon>
        <taxon>Gunneridae</taxon>
        <taxon>Pentapetalae</taxon>
        <taxon>rosids</taxon>
        <taxon>malvids</taxon>
        <taxon>Brassicales</taxon>
        <taxon>Brassicaceae</taxon>
        <taxon>Camelineae</taxon>
        <taxon>Arabidopsis</taxon>
    </lineage>
</organism>
<evidence type="ECO:0000250" key="1"/>
<evidence type="ECO:0000255" key="2"/>
<evidence type="ECO:0000269" key="3">
    <source>
    </source>
</evidence>
<evidence type="ECO:0000305" key="4"/>
<proteinExistence type="evidence at transcript level"/>
<keyword id="KW-1015">Disulfide bond</keyword>
<keyword id="KW-1185">Reference proteome</keyword>
<keyword id="KW-0732">Signal</keyword>
<sequence>MISSSHFAIFCIILVSLFALQQYEIGNMEENLNASKIVVYLSPCVRKRCSFSLFKNCHCCRGKYHFCSKNIKVCEKECLRLNPPRPLP</sequence>
<reference key="1">
    <citation type="journal article" date="1998" name="DNA Res.">
        <title>Structural analysis of Arabidopsis thaliana chromosome 5. VI. Sequence features of the regions of 1,367,185 bp covered by 19 physically assigned P1 and TAC clones.</title>
        <authorList>
            <person name="Kotani H."/>
            <person name="Nakamura Y."/>
            <person name="Sato S."/>
            <person name="Asamizu E."/>
            <person name="Kaneko T."/>
            <person name="Miyajima N."/>
            <person name="Tabata S."/>
        </authorList>
    </citation>
    <scope>NUCLEOTIDE SEQUENCE [LARGE SCALE GENOMIC DNA]</scope>
    <source>
        <strain>cv. Columbia</strain>
    </source>
</reference>
<reference key="2">
    <citation type="journal article" date="2017" name="Plant J.">
        <title>Araport11: a complete reannotation of the Arabidopsis thaliana reference genome.</title>
        <authorList>
            <person name="Cheng C.Y."/>
            <person name="Krishnakumar V."/>
            <person name="Chan A.P."/>
            <person name="Thibaud-Nissen F."/>
            <person name="Schobel S."/>
            <person name="Town C.D."/>
        </authorList>
    </citation>
    <scope>GENOME REANNOTATION</scope>
    <source>
        <strain>cv. Columbia</strain>
    </source>
</reference>
<reference key="3">
    <citation type="journal article" date="2014" name="Science">
        <title>Central cell-derived peptides regulate early embryo patterning in flowering plants.</title>
        <authorList>
            <person name="Costa L.M."/>
            <person name="Marshall E."/>
            <person name="Tesfaye M."/>
            <person name="Silverstein K.A."/>
            <person name="Mori M."/>
            <person name="Umetsu Y."/>
            <person name="Otterbach S.L."/>
            <person name="Papareddy R."/>
            <person name="Dickinson H.G."/>
            <person name="Boutiller K."/>
            <person name="VandenBosch K.A."/>
            <person name="Ohki S."/>
            <person name="Gutierrez-Marcos J.F."/>
        </authorList>
    </citation>
    <scope>IDENTIFICATION</scope>
    <scope>TISSUE SPECIFICITY</scope>
</reference>
<protein>
    <recommendedName>
        <fullName>EMBRYO SURROUNDING FACTOR 1-like protein 11</fullName>
    </recommendedName>
</protein>
<dbReference type="EMBL" id="AB012248">
    <property type="status" value="NOT_ANNOTATED_CDS"/>
    <property type="molecule type" value="Genomic_DNA"/>
</dbReference>
<dbReference type="EMBL" id="CP002688">
    <property type="protein sequence ID" value="AED95930.1"/>
    <property type="molecule type" value="Genomic_DNA"/>
</dbReference>
<dbReference type="RefSeq" id="NP_001078741.1">
    <property type="nucleotide sequence ID" value="NM_001085272.2"/>
</dbReference>
<dbReference type="PaxDb" id="3702-AT5G50345.1"/>
<dbReference type="EnsemblPlants" id="AT5G50345.1">
    <property type="protein sequence ID" value="AT5G50345.1"/>
    <property type="gene ID" value="AT5G50345"/>
</dbReference>
<dbReference type="GeneID" id="5008303"/>
<dbReference type="Gramene" id="AT5G50345.1">
    <property type="protein sequence ID" value="AT5G50345.1"/>
    <property type="gene ID" value="AT5G50345"/>
</dbReference>
<dbReference type="KEGG" id="ath:AT5G50345"/>
<dbReference type="Araport" id="AT5G50345"/>
<dbReference type="TAIR" id="AT5G50345"/>
<dbReference type="HOGENOM" id="CLU_183999_1_0_1"/>
<dbReference type="InParanoid" id="A8MRV5"/>
<dbReference type="OMA" id="FKNCHCC"/>
<dbReference type="PhylomeDB" id="A8MRV5"/>
<dbReference type="PRO" id="PR:A8MRV5"/>
<dbReference type="Proteomes" id="UP000006548">
    <property type="component" value="Chromosome 5"/>
</dbReference>
<dbReference type="ExpressionAtlas" id="A8MRV5">
    <property type="expression patterns" value="baseline and differential"/>
</dbReference>